<keyword id="KW-0414">Isoprene biosynthesis</keyword>
<keyword id="KW-0464">Manganese</keyword>
<keyword id="KW-0479">Metal-binding</keyword>
<keyword id="KW-0521">NADP</keyword>
<keyword id="KW-0560">Oxidoreductase</keyword>
<protein>
    <recommendedName>
        <fullName evidence="1">1-deoxy-D-xylulose 5-phosphate reductoisomerase</fullName>
        <shortName evidence="1">DXP reductoisomerase</shortName>
        <ecNumber evidence="1">1.1.1.267</ecNumber>
    </recommendedName>
    <alternativeName>
        <fullName evidence="1">1-deoxyxylulose-5-phosphate reductoisomerase</fullName>
    </alternativeName>
    <alternativeName>
        <fullName evidence="1">2-C-methyl-D-erythritol 4-phosphate synthase</fullName>
    </alternativeName>
</protein>
<feature type="chain" id="PRO_1000098529" description="1-deoxy-D-xylulose 5-phosphate reductoisomerase">
    <location>
        <begin position="1"/>
        <end position="394"/>
    </location>
</feature>
<feature type="binding site" evidence="1">
    <location>
        <position position="14"/>
    </location>
    <ligand>
        <name>NADPH</name>
        <dbReference type="ChEBI" id="CHEBI:57783"/>
    </ligand>
</feature>
<feature type="binding site" evidence="1">
    <location>
        <position position="15"/>
    </location>
    <ligand>
        <name>NADPH</name>
        <dbReference type="ChEBI" id="CHEBI:57783"/>
    </ligand>
</feature>
<feature type="binding site" evidence="1">
    <location>
        <position position="16"/>
    </location>
    <ligand>
        <name>NADPH</name>
        <dbReference type="ChEBI" id="CHEBI:57783"/>
    </ligand>
</feature>
<feature type="binding site" evidence="1">
    <location>
        <position position="17"/>
    </location>
    <ligand>
        <name>NADPH</name>
        <dbReference type="ChEBI" id="CHEBI:57783"/>
    </ligand>
</feature>
<feature type="binding site" evidence="1">
    <location>
        <position position="40"/>
    </location>
    <ligand>
        <name>NADPH</name>
        <dbReference type="ChEBI" id="CHEBI:57783"/>
    </ligand>
</feature>
<feature type="binding site" evidence="1">
    <location>
        <position position="128"/>
    </location>
    <ligand>
        <name>NADPH</name>
        <dbReference type="ChEBI" id="CHEBI:57783"/>
    </ligand>
</feature>
<feature type="binding site" evidence="1">
    <location>
        <position position="129"/>
    </location>
    <ligand>
        <name>1-deoxy-D-xylulose 5-phosphate</name>
        <dbReference type="ChEBI" id="CHEBI:57792"/>
    </ligand>
</feature>
<feature type="binding site" evidence="1">
    <location>
        <position position="130"/>
    </location>
    <ligand>
        <name>NADPH</name>
        <dbReference type="ChEBI" id="CHEBI:57783"/>
    </ligand>
</feature>
<feature type="binding site" evidence="1">
    <location>
        <position position="154"/>
    </location>
    <ligand>
        <name>Mn(2+)</name>
        <dbReference type="ChEBI" id="CHEBI:29035"/>
    </ligand>
</feature>
<feature type="binding site" evidence="1">
    <location>
        <position position="155"/>
    </location>
    <ligand>
        <name>1-deoxy-D-xylulose 5-phosphate</name>
        <dbReference type="ChEBI" id="CHEBI:57792"/>
    </ligand>
</feature>
<feature type="binding site" evidence="1">
    <location>
        <position position="156"/>
    </location>
    <ligand>
        <name>1-deoxy-D-xylulose 5-phosphate</name>
        <dbReference type="ChEBI" id="CHEBI:57792"/>
    </ligand>
</feature>
<feature type="binding site" evidence="1">
    <location>
        <position position="156"/>
    </location>
    <ligand>
        <name>Mn(2+)</name>
        <dbReference type="ChEBI" id="CHEBI:29035"/>
    </ligand>
</feature>
<feature type="binding site" evidence="1">
    <location>
        <position position="180"/>
    </location>
    <ligand>
        <name>1-deoxy-D-xylulose 5-phosphate</name>
        <dbReference type="ChEBI" id="CHEBI:57792"/>
    </ligand>
</feature>
<feature type="binding site" evidence="1">
    <location>
        <position position="203"/>
    </location>
    <ligand>
        <name>1-deoxy-D-xylulose 5-phosphate</name>
        <dbReference type="ChEBI" id="CHEBI:57792"/>
    </ligand>
</feature>
<feature type="binding site" evidence="1">
    <location>
        <position position="209"/>
    </location>
    <ligand>
        <name>NADPH</name>
        <dbReference type="ChEBI" id="CHEBI:57783"/>
    </ligand>
</feature>
<feature type="binding site" evidence="1">
    <location>
        <position position="216"/>
    </location>
    <ligand>
        <name>1-deoxy-D-xylulose 5-phosphate</name>
        <dbReference type="ChEBI" id="CHEBI:57792"/>
    </ligand>
</feature>
<feature type="binding site" evidence="1">
    <location>
        <position position="221"/>
    </location>
    <ligand>
        <name>1-deoxy-D-xylulose 5-phosphate</name>
        <dbReference type="ChEBI" id="CHEBI:57792"/>
    </ligand>
</feature>
<feature type="binding site" evidence="1">
    <location>
        <position position="222"/>
    </location>
    <ligand>
        <name>1-deoxy-D-xylulose 5-phosphate</name>
        <dbReference type="ChEBI" id="CHEBI:57792"/>
    </ligand>
</feature>
<feature type="binding site" evidence="1">
    <location>
        <position position="225"/>
    </location>
    <ligand>
        <name>1-deoxy-D-xylulose 5-phosphate</name>
        <dbReference type="ChEBI" id="CHEBI:57792"/>
    </ligand>
</feature>
<feature type="binding site" evidence="1">
    <location>
        <position position="225"/>
    </location>
    <ligand>
        <name>Mn(2+)</name>
        <dbReference type="ChEBI" id="CHEBI:29035"/>
    </ligand>
</feature>
<organism>
    <name type="scientific">Xylella fastidiosa (strain M12)</name>
    <dbReference type="NCBI Taxonomy" id="405440"/>
    <lineage>
        <taxon>Bacteria</taxon>
        <taxon>Pseudomonadati</taxon>
        <taxon>Pseudomonadota</taxon>
        <taxon>Gammaproteobacteria</taxon>
        <taxon>Lysobacterales</taxon>
        <taxon>Lysobacteraceae</taxon>
        <taxon>Xylella</taxon>
    </lineage>
</organism>
<name>DXR_XYLFM</name>
<proteinExistence type="inferred from homology"/>
<reference key="1">
    <citation type="journal article" date="2010" name="J. Bacteriol.">
        <title>Whole genome sequences of two Xylella fastidiosa strains (M12 and M23) causing almond leaf scorch disease in California.</title>
        <authorList>
            <person name="Chen J."/>
            <person name="Xie G."/>
            <person name="Han S."/>
            <person name="Chertkov O."/>
            <person name="Sims D."/>
            <person name="Civerolo E.L."/>
        </authorList>
    </citation>
    <scope>NUCLEOTIDE SEQUENCE [LARGE SCALE GENOMIC DNA]</scope>
    <source>
        <strain>M12</strain>
    </source>
</reference>
<accession>B0U242</accession>
<gene>
    <name evidence="1" type="primary">dxr</name>
    <name type="ordered locus">Xfasm12_0359</name>
</gene>
<evidence type="ECO:0000255" key="1">
    <source>
        <dbReference type="HAMAP-Rule" id="MF_00183"/>
    </source>
</evidence>
<comment type="function">
    <text evidence="1">Catalyzes the NADPH-dependent rearrangement and reduction of 1-deoxy-D-xylulose-5-phosphate (DXP) to 2-C-methyl-D-erythritol 4-phosphate (MEP).</text>
</comment>
<comment type="catalytic activity">
    <reaction evidence="1">
        <text>2-C-methyl-D-erythritol 4-phosphate + NADP(+) = 1-deoxy-D-xylulose 5-phosphate + NADPH + H(+)</text>
        <dbReference type="Rhea" id="RHEA:13717"/>
        <dbReference type="ChEBI" id="CHEBI:15378"/>
        <dbReference type="ChEBI" id="CHEBI:57783"/>
        <dbReference type="ChEBI" id="CHEBI:57792"/>
        <dbReference type="ChEBI" id="CHEBI:58262"/>
        <dbReference type="ChEBI" id="CHEBI:58349"/>
        <dbReference type="EC" id="1.1.1.267"/>
    </reaction>
    <physiologicalReaction direction="right-to-left" evidence="1">
        <dbReference type="Rhea" id="RHEA:13719"/>
    </physiologicalReaction>
</comment>
<comment type="cofactor">
    <cofactor evidence="1">
        <name>Mg(2+)</name>
        <dbReference type="ChEBI" id="CHEBI:18420"/>
    </cofactor>
    <cofactor evidence="1">
        <name>Mn(2+)</name>
        <dbReference type="ChEBI" id="CHEBI:29035"/>
    </cofactor>
</comment>
<comment type="pathway">
    <text evidence="1">Isoprenoid biosynthesis; isopentenyl diphosphate biosynthesis via DXP pathway; isopentenyl diphosphate from 1-deoxy-D-xylulose 5-phosphate: step 1/6.</text>
</comment>
<comment type="similarity">
    <text evidence="1">Belongs to the DXR family.</text>
</comment>
<dbReference type="EC" id="1.1.1.267" evidence="1"/>
<dbReference type="EMBL" id="CP000941">
    <property type="protein sequence ID" value="ACA11376.1"/>
    <property type="molecule type" value="Genomic_DNA"/>
</dbReference>
<dbReference type="SMR" id="B0U242"/>
<dbReference type="KEGG" id="xfm:Xfasm12_0359"/>
<dbReference type="HOGENOM" id="CLU_035714_4_0_6"/>
<dbReference type="UniPathway" id="UPA00056">
    <property type="reaction ID" value="UER00092"/>
</dbReference>
<dbReference type="GO" id="GO:0030604">
    <property type="term" value="F:1-deoxy-D-xylulose-5-phosphate reductoisomerase activity"/>
    <property type="evidence" value="ECO:0007669"/>
    <property type="project" value="UniProtKB-UniRule"/>
</dbReference>
<dbReference type="GO" id="GO:0030145">
    <property type="term" value="F:manganese ion binding"/>
    <property type="evidence" value="ECO:0007669"/>
    <property type="project" value="TreeGrafter"/>
</dbReference>
<dbReference type="GO" id="GO:0070402">
    <property type="term" value="F:NADPH binding"/>
    <property type="evidence" value="ECO:0007669"/>
    <property type="project" value="InterPro"/>
</dbReference>
<dbReference type="GO" id="GO:0051484">
    <property type="term" value="P:isopentenyl diphosphate biosynthetic process, methylerythritol 4-phosphate pathway involved in terpenoid biosynthetic process"/>
    <property type="evidence" value="ECO:0007669"/>
    <property type="project" value="TreeGrafter"/>
</dbReference>
<dbReference type="FunFam" id="3.40.50.720:FF:000045">
    <property type="entry name" value="1-deoxy-D-xylulose 5-phosphate reductoisomerase"/>
    <property type="match status" value="1"/>
</dbReference>
<dbReference type="Gene3D" id="1.10.1740.10">
    <property type="match status" value="1"/>
</dbReference>
<dbReference type="Gene3D" id="3.40.50.720">
    <property type="entry name" value="NAD(P)-binding Rossmann-like Domain"/>
    <property type="match status" value="1"/>
</dbReference>
<dbReference type="HAMAP" id="MF_00183">
    <property type="entry name" value="DXP_reductoisom"/>
    <property type="match status" value="1"/>
</dbReference>
<dbReference type="InterPro" id="IPR003821">
    <property type="entry name" value="DXP_reductoisomerase"/>
</dbReference>
<dbReference type="InterPro" id="IPR013644">
    <property type="entry name" value="DXP_reductoisomerase_C"/>
</dbReference>
<dbReference type="InterPro" id="IPR013512">
    <property type="entry name" value="DXP_reductoisomerase_N"/>
</dbReference>
<dbReference type="InterPro" id="IPR026877">
    <property type="entry name" value="DXPR_C"/>
</dbReference>
<dbReference type="InterPro" id="IPR036169">
    <property type="entry name" value="DXPR_C_sf"/>
</dbReference>
<dbReference type="InterPro" id="IPR036291">
    <property type="entry name" value="NAD(P)-bd_dom_sf"/>
</dbReference>
<dbReference type="NCBIfam" id="TIGR00243">
    <property type="entry name" value="Dxr"/>
    <property type="match status" value="1"/>
</dbReference>
<dbReference type="PANTHER" id="PTHR30525">
    <property type="entry name" value="1-DEOXY-D-XYLULOSE 5-PHOSPHATE REDUCTOISOMERASE"/>
    <property type="match status" value="1"/>
</dbReference>
<dbReference type="PANTHER" id="PTHR30525:SF0">
    <property type="entry name" value="1-DEOXY-D-XYLULOSE 5-PHOSPHATE REDUCTOISOMERASE, CHLOROPLASTIC"/>
    <property type="match status" value="1"/>
</dbReference>
<dbReference type="Pfam" id="PF08436">
    <property type="entry name" value="DXP_redisom_C"/>
    <property type="match status" value="1"/>
</dbReference>
<dbReference type="Pfam" id="PF02670">
    <property type="entry name" value="DXP_reductoisom"/>
    <property type="match status" value="1"/>
</dbReference>
<dbReference type="Pfam" id="PF13288">
    <property type="entry name" value="DXPR_C"/>
    <property type="match status" value="1"/>
</dbReference>
<dbReference type="PIRSF" id="PIRSF006205">
    <property type="entry name" value="Dxp_reductismrs"/>
    <property type="match status" value="1"/>
</dbReference>
<dbReference type="SUPFAM" id="SSF69055">
    <property type="entry name" value="1-deoxy-D-xylulose-5-phosphate reductoisomerase, C-terminal domain"/>
    <property type="match status" value="1"/>
</dbReference>
<dbReference type="SUPFAM" id="SSF55347">
    <property type="entry name" value="Glyceraldehyde-3-phosphate dehydrogenase-like, C-terminal domain"/>
    <property type="match status" value="1"/>
</dbReference>
<dbReference type="SUPFAM" id="SSF51735">
    <property type="entry name" value="NAD(P)-binding Rossmann-fold domains"/>
    <property type="match status" value="1"/>
</dbReference>
<sequence>MTKPIRNVAVLGATGSIGAAALDVLARHPRQFHVSLLAAGQRVDALLALCHTYRPDHAVIGDATLYTTLRDGLNAAGLATKAYAGEAALAELVASTTCDTVVAAIVGAAGLHSTLAAARAGKRLLLANKESLVLAGMLLMREASISGAEIIPIDSEHNAIFQCLRSRTTNGVHRVTLTASGGPFRGHNRTMLAKITPTQAMAHPTWSMGPKISVDSATLMNKGLEVIEAHHLFGLPSEQIDVLVHPQSLVHSLVEFIDGSTLAQLSLPDMRTTLAVGLAWPERIGSGVPGLDLMKHNRLDFEHPDTETFSCLRLARDAMQTGGTAPAVLNAANEIAVSAFLQGRIGFLTIPALIEHALTTLPRYEADTLETLLTVDTETRRITHAALTHFPLPL</sequence>